<keyword id="KW-0007">Acetylation</keyword>
<keyword id="KW-0963">Cytoplasm</keyword>
<keyword id="KW-0903">Direct protein sequencing</keyword>
<keyword id="KW-0396">Initiation factor</keyword>
<keyword id="KW-1017">Isopeptide bond</keyword>
<keyword id="KW-0488">Methylation</keyword>
<keyword id="KW-0597">Phosphoprotein</keyword>
<keyword id="KW-0648">Protein biosynthesis</keyword>
<keyword id="KW-1185">Reference proteome</keyword>
<keyword id="KW-0832">Ubl conjugation</keyword>
<comment type="function">
    <text evidence="3">Acts as a component of the translation initiation factor 2B (eIF2B) complex, which catalyzes the exchange of GDP for GTP on eukaryotic initiation factor 2 (eIF2) gamma subunit. Its guanine nucleotide exchange factor activity is repressed when bound to eIF2 complex phosphorylated on the alpha subunit, thereby limiting the amount of methionyl-initiator methionine tRNA available to the ribosome and consequently global translation is repressed.</text>
</comment>
<comment type="activity regulation">
    <text evidence="3">Activated by the chemical integrated stress response (ISR) inhibitor ISRIB which stimulates guanine nucleotide exchange factor activity for both phosphorylated and unphosphorylated eIF2.</text>
</comment>
<comment type="subunit">
    <text evidence="3">Component of the translation initiation factor 2B (eIF2B) complex which is a heterodecamer of two sets of five different subunits: alpha, beta, gamma, delta and epsilon. Subunits alpha, beta and delta comprise a regulatory subcomplex and subunits epsilon and gamma comprise a catalytic subcomplex. Within the complex, the hexameric regulatory complex resides at the center, with the two heterodimeric catalytic subcomplexes bound on opposite sides.</text>
</comment>
<comment type="subcellular location">
    <subcellularLocation>
        <location evidence="2">Cytoplasm</location>
        <location evidence="2">Cytosol</location>
    </subcellularLocation>
</comment>
<comment type="tissue specificity">
    <text>Ubiquitously expressed.</text>
</comment>
<comment type="PTM">
    <text evidence="1">Phosphorylated at Ser-544 by DYRK2; this is required for subsequent phosphorylation by GSK3B. Phosphorylated on serine and threonine residues by GSK3B; phosphorylation inhibits its function (By similarity).</text>
</comment>
<comment type="PTM">
    <text evidence="1">Polyubiquitinated, probably by NEDD4.</text>
</comment>
<comment type="similarity">
    <text evidence="8">Belongs to the eIF-2B gamma/epsilon subunits family.</text>
</comment>
<gene>
    <name type="primary">EIF2B5</name>
    <name type="synonym">EIF2BE</name>
</gene>
<organism>
    <name type="scientific">Oryctolagus cuniculus</name>
    <name type="common">Rabbit</name>
    <dbReference type="NCBI Taxonomy" id="9986"/>
    <lineage>
        <taxon>Eukaryota</taxon>
        <taxon>Metazoa</taxon>
        <taxon>Chordata</taxon>
        <taxon>Craniata</taxon>
        <taxon>Vertebrata</taxon>
        <taxon>Euteleostomi</taxon>
        <taxon>Mammalia</taxon>
        <taxon>Eutheria</taxon>
        <taxon>Euarchontoglires</taxon>
        <taxon>Glires</taxon>
        <taxon>Lagomorpha</taxon>
        <taxon>Leporidae</taxon>
        <taxon>Oryctolagus</taxon>
    </lineage>
</organism>
<evidence type="ECO:0000250" key="1"/>
<evidence type="ECO:0000250" key="2">
    <source>
        <dbReference type="UniProtKB" id="P56287"/>
    </source>
</evidence>
<evidence type="ECO:0000250" key="3">
    <source>
        <dbReference type="UniProtKB" id="Q13144"/>
    </source>
</evidence>
<evidence type="ECO:0000250" key="4">
    <source>
        <dbReference type="UniProtKB" id="Q64350"/>
    </source>
</evidence>
<evidence type="ECO:0000250" key="5">
    <source>
        <dbReference type="UniProtKB" id="Q8CHW4"/>
    </source>
</evidence>
<evidence type="ECO:0000255" key="6">
    <source>
        <dbReference type="PROSITE-ProRule" id="PRU00695"/>
    </source>
</evidence>
<evidence type="ECO:0000256" key="7">
    <source>
        <dbReference type="SAM" id="MobiDB-lite"/>
    </source>
</evidence>
<evidence type="ECO:0000305" key="8"/>
<sequence>MATTVVAPPGAVSDRANKRGGGPGGGGGGGGARGAEEESPPPLQAVLVADSFNRRFFPISKDQPRVLLPLANVALIDYTLEFLTATGVQETFVFCCWKAAQIKEHLQKSKWCRPTSLNVVRIITSELYRSLGDVLRDVDAKALVRSDFLLVYGDVVSNINVTRALEEHRLRRKLEKNVSVMTMIFKESSPSHPTRCHEDNVVVAVDSATNRILHFQKTQGLRRFSFPLSLFQGSGAGVEIRYDLLDCHISICSPQVAQLFTDNFDYQTRDDFVRGLLVNEEILGNQIHMHVTTREYGARVSNLHMYSAVCADVIRRWVYPLTPEANFTDSTAQSCTHSRHNIYRGPEVSLGHGSILEENVLLGSGTVIGSNCSITNSVIGPGCCIGDNVVLDRAYLWKGVQVASGAQIHQSLLCDHAEVKEQVTLKPHCVLTSQVVVGPNITLPEGSVISLHPPDAEEDEDDGQFSDDSGVNQAKEKAKLKGYNPAEVGVAGKGYLWKAADMNTEKEEELRQSLWGLTINEEEESETESERSMDSEELDSRAGSPQLDDIKVFQNEVLGTLQRGKEESISCDNLILEINSLKYAYNISLKEVMQVLSHVVLEFPLQQMDSPLEANRYCALLLPLLKAWSPVFRNYIKRAADHLEALAAIEEFFLEHEALGTCIAKVLMGFYQLEILAEETILSWFGQRDVTDKGRQLRKNQQLQRFIQWLKEAEEESSEDD</sequence>
<accession>P47823</accession>
<feature type="initiator methionine" description="Removed" evidence="3">
    <location>
        <position position="1"/>
    </location>
</feature>
<feature type="chain" id="PRO_0000156074" description="Translation initiation factor eIF2B subunit epsilon">
    <location>
        <begin position="2"/>
        <end position="721"/>
    </location>
</feature>
<feature type="domain" description="W2" evidence="6">
    <location>
        <begin position="543"/>
        <end position="720"/>
    </location>
</feature>
<feature type="region of interest" description="Disordered" evidence="7">
    <location>
        <begin position="1"/>
        <end position="40"/>
    </location>
</feature>
<feature type="region of interest" description="Disordered" evidence="7">
    <location>
        <begin position="446"/>
        <end position="478"/>
    </location>
</feature>
<feature type="region of interest" description="Disordered" evidence="7">
    <location>
        <begin position="517"/>
        <end position="545"/>
    </location>
</feature>
<feature type="compositionally biased region" description="Gly residues" evidence="7">
    <location>
        <begin position="19"/>
        <end position="33"/>
    </location>
</feature>
<feature type="compositionally biased region" description="Acidic residues" evidence="7">
    <location>
        <begin position="456"/>
        <end position="465"/>
    </location>
</feature>
<feature type="compositionally biased region" description="Basic and acidic residues" evidence="7">
    <location>
        <begin position="528"/>
        <end position="540"/>
    </location>
</feature>
<feature type="modified residue" description="N-acetylalanine" evidence="3">
    <location>
        <position position="2"/>
    </location>
</feature>
<feature type="modified residue" description="Omega-N-methylarginine" evidence="5">
    <location>
        <position position="19"/>
    </location>
</feature>
<feature type="modified residue" description="Phosphoserine" evidence="4">
    <location>
        <position position="130"/>
    </location>
</feature>
<feature type="modified residue" description="Phosphothreonine" evidence="4">
    <location>
        <position position="322"/>
    </location>
</feature>
<feature type="modified residue" description="Phosphoserine" evidence="3">
    <location>
        <position position="450"/>
    </location>
</feature>
<feature type="modified residue" description="Phosphoserine" evidence="3">
    <location>
        <position position="466"/>
    </location>
</feature>
<feature type="modified residue" description="Phosphoserine" evidence="3">
    <location>
        <position position="469"/>
    </location>
</feature>
<feature type="modified residue" description="Phosphoserine" evidence="4">
    <location>
        <position position="532"/>
    </location>
</feature>
<feature type="modified residue" description="Phosphoserine" evidence="4">
    <location>
        <position position="540"/>
    </location>
</feature>
<feature type="modified residue" description="Phosphoserine; by DYRK2" evidence="3">
    <location>
        <position position="544"/>
    </location>
</feature>
<feature type="modified residue" description="Phosphoserine" evidence="3">
    <location>
        <position position="717"/>
    </location>
</feature>
<feature type="cross-link" description="Glycyl lysine isopeptide (Lys-Gly) (interchain with G-Cter in ubiquitin)" evidence="4">
    <location>
        <position position="61"/>
    </location>
</feature>
<feature type="cross-link" description="Glycyl lysine isopeptide (Lys-Gly) (interchain with G-Cter in ubiquitin)" evidence="4">
    <location>
        <position position="103"/>
    </location>
</feature>
<feature type="cross-link" description="Glycyl lysine isopeptide (Lys-Gly) (interchain with G-Cter in ubiquitin)" evidence="4">
    <location>
        <position position="141"/>
    </location>
</feature>
<feature type="cross-link" description="Glycyl lysine isopeptide (Lys-Gly) (interchain with G-Cter in ubiquitin)" evidence="4">
    <location>
        <position position="217"/>
    </location>
</feature>
<feature type="sequence conflict" description="In Ref. 1; AA sequence." evidence="8" ref="1">
    <original>GT</original>
    <variation>FA</variation>
    <location>
        <begin position="365"/>
        <end position="366"/>
    </location>
</feature>
<dbReference type="EMBL" id="U23037">
    <property type="protein sequence ID" value="AAC48618.1"/>
    <property type="molecule type" value="mRNA"/>
</dbReference>
<dbReference type="RefSeq" id="NP_001076143.1">
    <property type="nucleotide sequence ID" value="NM_001082674.1"/>
</dbReference>
<dbReference type="SMR" id="P47823"/>
<dbReference type="FunCoup" id="P47823">
    <property type="interactions" value="3507"/>
</dbReference>
<dbReference type="STRING" id="9986.ENSOCUP00000003919"/>
<dbReference type="iPTMnet" id="P47823"/>
<dbReference type="PaxDb" id="9986-ENSOCUP00000003919"/>
<dbReference type="GeneID" id="100009393"/>
<dbReference type="KEGG" id="ocu:100009393"/>
<dbReference type="CTD" id="8893"/>
<dbReference type="eggNOG" id="KOG1461">
    <property type="taxonomic scope" value="Eukaryota"/>
</dbReference>
<dbReference type="HOGENOM" id="CLU_012507_2_0_1"/>
<dbReference type="InParanoid" id="P47823"/>
<dbReference type="OMA" id="LAQSCKI"/>
<dbReference type="OrthoDB" id="424572at2759"/>
<dbReference type="TreeFam" id="TF101509"/>
<dbReference type="Proteomes" id="UP000001811">
    <property type="component" value="Unplaced"/>
</dbReference>
<dbReference type="GO" id="GO:0005737">
    <property type="term" value="C:cytoplasm"/>
    <property type="evidence" value="ECO:0000250"/>
    <property type="project" value="UniProtKB"/>
</dbReference>
<dbReference type="GO" id="GO:0005829">
    <property type="term" value="C:cytosol"/>
    <property type="evidence" value="ECO:0007669"/>
    <property type="project" value="UniProtKB-SubCell"/>
</dbReference>
<dbReference type="GO" id="GO:0005851">
    <property type="term" value="C:eukaryotic translation initiation factor 2B complex"/>
    <property type="evidence" value="ECO:0000250"/>
    <property type="project" value="UniProtKB"/>
</dbReference>
<dbReference type="GO" id="GO:0005085">
    <property type="term" value="F:guanyl-nucleotide exchange factor activity"/>
    <property type="evidence" value="ECO:0000315"/>
    <property type="project" value="UniProtKB"/>
</dbReference>
<dbReference type="GO" id="GO:0003743">
    <property type="term" value="F:translation initiation factor activity"/>
    <property type="evidence" value="ECO:0007669"/>
    <property type="project" value="UniProtKB-KW"/>
</dbReference>
<dbReference type="GO" id="GO:0031369">
    <property type="term" value="F:translation initiation factor binding"/>
    <property type="evidence" value="ECO:0007669"/>
    <property type="project" value="InterPro"/>
</dbReference>
<dbReference type="GO" id="GO:0014002">
    <property type="term" value="P:astrocyte development"/>
    <property type="evidence" value="ECO:0000250"/>
    <property type="project" value="UniProtKB"/>
</dbReference>
<dbReference type="GO" id="GO:0048708">
    <property type="term" value="P:astrocyte differentiation"/>
    <property type="evidence" value="ECO:0000250"/>
    <property type="project" value="UniProtKB"/>
</dbReference>
<dbReference type="GO" id="GO:0002183">
    <property type="term" value="P:cytoplasmic translational initiation"/>
    <property type="evidence" value="ECO:0000250"/>
    <property type="project" value="UniProtKB"/>
</dbReference>
<dbReference type="GO" id="GO:0042552">
    <property type="term" value="P:myelination"/>
    <property type="evidence" value="ECO:0000250"/>
    <property type="project" value="UniProtKB"/>
</dbReference>
<dbReference type="GO" id="GO:0014003">
    <property type="term" value="P:oligodendrocyte development"/>
    <property type="evidence" value="ECO:0000250"/>
    <property type="project" value="UniProtKB"/>
</dbReference>
<dbReference type="GO" id="GO:0001541">
    <property type="term" value="P:ovarian follicle development"/>
    <property type="evidence" value="ECO:0000250"/>
    <property type="project" value="UniProtKB"/>
</dbReference>
<dbReference type="GO" id="GO:0045948">
    <property type="term" value="P:positive regulation of translational initiation"/>
    <property type="evidence" value="ECO:0000315"/>
    <property type="project" value="UniProtKB"/>
</dbReference>
<dbReference type="GO" id="GO:0034976">
    <property type="term" value="P:response to endoplasmic reticulum stress"/>
    <property type="evidence" value="ECO:0000250"/>
    <property type="project" value="UniProtKB"/>
</dbReference>
<dbReference type="GO" id="GO:0009749">
    <property type="term" value="P:response to glucose"/>
    <property type="evidence" value="ECO:0000250"/>
    <property type="project" value="UniProtKB"/>
</dbReference>
<dbReference type="GO" id="GO:0009408">
    <property type="term" value="P:response to heat"/>
    <property type="evidence" value="ECO:0000250"/>
    <property type="project" value="UniProtKB"/>
</dbReference>
<dbReference type="GO" id="GO:0043434">
    <property type="term" value="P:response to peptide hormone"/>
    <property type="evidence" value="ECO:0000250"/>
    <property type="project" value="UniProtKB"/>
</dbReference>
<dbReference type="GO" id="GO:0050852">
    <property type="term" value="P:T cell receptor signaling pathway"/>
    <property type="evidence" value="ECO:0000250"/>
    <property type="project" value="UniProtKB"/>
</dbReference>
<dbReference type="GO" id="GO:0006413">
    <property type="term" value="P:translational initiation"/>
    <property type="evidence" value="ECO:0000250"/>
    <property type="project" value="UniProtKB"/>
</dbReference>
<dbReference type="CDD" id="cd04197">
    <property type="entry name" value="eIF-2B_epsilon_N"/>
    <property type="match status" value="1"/>
</dbReference>
<dbReference type="CDD" id="cd11558">
    <property type="entry name" value="W2_eIF2B_epsilon"/>
    <property type="match status" value="1"/>
</dbReference>
<dbReference type="FunFam" id="1.25.40.180:FF:000022">
    <property type="entry name" value="Translation initiation factor eIF-2B epsilon subunit"/>
    <property type="match status" value="1"/>
</dbReference>
<dbReference type="FunFam" id="2.160.10.10:FF:000026">
    <property type="entry name" value="Translation initiation factor eIF-2B subunit epsilon"/>
    <property type="match status" value="1"/>
</dbReference>
<dbReference type="FunFam" id="2.160.10.10:FF:000027">
    <property type="entry name" value="Translation initiation factor eIF-2B subunit epsilon"/>
    <property type="match status" value="1"/>
</dbReference>
<dbReference type="FunFam" id="3.90.550.10:FF:000100">
    <property type="entry name" value="translation initiation factor eIF-2B subunit epsilon"/>
    <property type="match status" value="1"/>
</dbReference>
<dbReference type="Gene3D" id="1.25.40.180">
    <property type="match status" value="1"/>
</dbReference>
<dbReference type="Gene3D" id="2.160.10.10">
    <property type="entry name" value="Hexapeptide repeat proteins"/>
    <property type="match status" value="2"/>
</dbReference>
<dbReference type="Gene3D" id="3.90.550.10">
    <property type="entry name" value="Spore Coat Polysaccharide Biosynthesis Protein SpsA, Chain A"/>
    <property type="match status" value="1"/>
</dbReference>
<dbReference type="InterPro" id="IPR016024">
    <property type="entry name" value="ARM-type_fold"/>
</dbReference>
<dbReference type="InterPro" id="IPR035543">
    <property type="entry name" value="eIF-2B_epsilon_N"/>
</dbReference>
<dbReference type="InterPro" id="IPR051956">
    <property type="entry name" value="eIF2B_epsilon"/>
</dbReference>
<dbReference type="InterPro" id="IPR029044">
    <property type="entry name" value="Nucleotide-diphossugar_trans"/>
</dbReference>
<dbReference type="InterPro" id="IPR011004">
    <property type="entry name" value="Trimer_LpxA-like_sf"/>
</dbReference>
<dbReference type="InterPro" id="IPR003307">
    <property type="entry name" value="W2_domain"/>
</dbReference>
<dbReference type="InterPro" id="IPR044123">
    <property type="entry name" value="W2_eIF2B_epsilon"/>
</dbReference>
<dbReference type="PANTHER" id="PTHR45887">
    <property type="entry name" value="TRANSLATION INITIATION FACTOR EIF-2B SUBUNIT EPSILON"/>
    <property type="match status" value="1"/>
</dbReference>
<dbReference type="PANTHER" id="PTHR45887:SF1">
    <property type="entry name" value="TRANSLATION INITIATION FACTOR EIF-2B SUBUNIT EPSILON"/>
    <property type="match status" value="1"/>
</dbReference>
<dbReference type="Pfam" id="PF25084">
    <property type="entry name" value="LbH_EIF2B"/>
    <property type="match status" value="1"/>
</dbReference>
<dbReference type="Pfam" id="PF02020">
    <property type="entry name" value="W2"/>
    <property type="match status" value="1"/>
</dbReference>
<dbReference type="SMART" id="SM00515">
    <property type="entry name" value="eIF5C"/>
    <property type="match status" value="1"/>
</dbReference>
<dbReference type="SUPFAM" id="SSF48371">
    <property type="entry name" value="ARM repeat"/>
    <property type="match status" value="1"/>
</dbReference>
<dbReference type="SUPFAM" id="SSF53448">
    <property type="entry name" value="Nucleotide-diphospho-sugar transferases"/>
    <property type="match status" value="1"/>
</dbReference>
<dbReference type="SUPFAM" id="SSF51161">
    <property type="entry name" value="Trimeric LpxA-like enzymes"/>
    <property type="match status" value="1"/>
</dbReference>
<dbReference type="PROSITE" id="PS51363">
    <property type="entry name" value="W2"/>
    <property type="match status" value="1"/>
</dbReference>
<proteinExistence type="evidence at protein level"/>
<protein>
    <recommendedName>
        <fullName>Translation initiation factor eIF2B subunit epsilon</fullName>
    </recommendedName>
    <alternativeName>
        <fullName>eIF2B GDP-GTP exchange factor subunit epsilon</fullName>
    </alternativeName>
</protein>
<reference key="1">
    <citation type="journal article" date="1996" name="Biochim. Biophys. Acta">
        <title>Cloning and characterization of cDNAs encoding the epsilon-subunit of eukaryotic initiation factor-2B from rabbit and human.</title>
        <authorList>
            <person name="Asuru A.I."/>
            <person name="Mellor H."/>
            <person name="Thomas N.S.B."/>
            <person name="Yu L."/>
            <person name="Chen J.-J."/>
            <person name="Crosby J.S."/>
            <person name="Hartson S.D."/>
            <person name="Kimball S.R."/>
            <person name="Jefferson L.S."/>
            <person name="Matts R.L."/>
        </authorList>
    </citation>
    <scope>NUCLEOTIDE SEQUENCE [MRNA]</scope>
    <scope>PROTEIN SEQUENCE OF 359-371 AND 448-456</scope>
    <source>
        <strain>New Zealand white</strain>
        <tissue>Reticulocyte</tissue>
    </source>
</reference>
<name>EI2BE_RABIT</name>